<name>DDL_GEOKA</name>
<keyword id="KW-0067">ATP-binding</keyword>
<keyword id="KW-0133">Cell shape</keyword>
<keyword id="KW-0961">Cell wall biogenesis/degradation</keyword>
<keyword id="KW-0963">Cytoplasm</keyword>
<keyword id="KW-0436">Ligase</keyword>
<keyword id="KW-0460">Magnesium</keyword>
<keyword id="KW-0464">Manganese</keyword>
<keyword id="KW-0479">Metal-binding</keyword>
<keyword id="KW-0547">Nucleotide-binding</keyword>
<keyword id="KW-0573">Peptidoglycan synthesis</keyword>
<keyword id="KW-1185">Reference proteome</keyword>
<comment type="function">
    <text evidence="2">Cell wall formation.</text>
</comment>
<comment type="catalytic activity">
    <reaction evidence="2">
        <text>2 D-alanine + ATP = D-alanyl-D-alanine + ADP + phosphate + H(+)</text>
        <dbReference type="Rhea" id="RHEA:11224"/>
        <dbReference type="ChEBI" id="CHEBI:15378"/>
        <dbReference type="ChEBI" id="CHEBI:30616"/>
        <dbReference type="ChEBI" id="CHEBI:43474"/>
        <dbReference type="ChEBI" id="CHEBI:57416"/>
        <dbReference type="ChEBI" id="CHEBI:57822"/>
        <dbReference type="ChEBI" id="CHEBI:456216"/>
        <dbReference type="EC" id="6.3.2.4"/>
    </reaction>
</comment>
<comment type="cofactor">
    <cofactor evidence="1">
        <name>Mg(2+)</name>
        <dbReference type="ChEBI" id="CHEBI:18420"/>
    </cofactor>
    <cofactor evidence="1">
        <name>Mn(2+)</name>
        <dbReference type="ChEBI" id="CHEBI:29035"/>
    </cofactor>
    <text evidence="1">Binds 2 magnesium or manganese ions per subunit.</text>
</comment>
<comment type="pathway">
    <text evidence="2">Cell wall biogenesis; peptidoglycan biosynthesis.</text>
</comment>
<comment type="subcellular location">
    <subcellularLocation>
        <location evidence="2">Cytoplasm</location>
    </subcellularLocation>
</comment>
<comment type="similarity">
    <text evidence="2">Belongs to the D-alanine--D-alanine ligase family.</text>
</comment>
<evidence type="ECO:0000250" key="1"/>
<evidence type="ECO:0000255" key="2">
    <source>
        <dbReference type="HAMAP-Rule" id="MF_00047"/>
    </source>
</evidence>
<reference key="1">
    <citation type="journal article" date="2004" name="Nucleic Acids Res.">
        <title>Thermoadaptation trait revealed by the genome sequence of thermophilic Geobacillus kaustophilus.</title>
        <authorList>
            <person name="Takami H."/>
            <person name="Takaki Y."/>
            <person name="Chee G.-J."/>
            <person name="Nishi S."/>
            <person name="Shimamura S."/>
            <person name="Suzuki H."/>
            <person name="Matsui S."/>
            <person name="Uchiyama I."/>
        </authorList>
    </citation>
    <scope>NUCLEOTIDE SEQUENCE [LARGE SCALE GENOMIC DNA]</scope>
    <source>
        <strain>HTA426</strain>
    </source>
</reference>
<dbReference type="EC" id="6.3.2.4" evidence="2"/>
<dbReference type="EMBL" id="BA000043">
    <property type="protein sequence ID" value="BAD74508.1"/>
    <property type="molecule type" value="Genomic_DNA"/>
</dbReference>
<dbReference type="RefSeq" id="WP_011229733.1">
    <property type="nucleotide sequence ID" value="NC_006510.1"/>
</dbReference>
<dbReference type="SMR" id="Q5L3H2"/>
<dbReference type="STRING" id="235909.GK0223"/>
<dbReference type="KEGG" id="gka:GK0223"/>
<dbReference type="PATRIC" id="fig|235909.7.peg.283"/>
<dbReference type="eggNOG" id="COG1181">
    <property type="taxonomic scope" value="Bacteria"/>
</dbReference>
<dbReference type="HOGENOM" id="CLU_039268_0_0_9"/>
<dbReference type="UniPathway" id="UPA00219"/>
<dbReference type="Proteomes" id="UP000001172">
    <property type="component" value="Chromosome"/>
</dbReference>
<dbReference type="GO" id="GO:0005829">
    <property type="term" value="C:cytosol"/>
    <property type="evidence" value="ECO:0007669"/>
    <property type="project" value="TreeGrafter"/>
</dbReference>
<dbReference type="GO" id="GO:0005524">
    <property type="term" value="F:ATP binding"/>
    <property type="evidence" value="ECO:0007669"/>
    <property type="project" value="UniProtKB-KW"/>
</dbReference>
<dbReference type="GO" id="GO:0008716">
    <property type="term" value="F:D-alanine-D-alanine ligase activity"/>
    <property type="evidence" value="ECO:0007669"/>
    <property type="project" value="UniProtKB-UniRule"/>
</dbReference>
<dbReference type="GO" id="GO:0046872">
    <property type="term" value="F:metal ion binding"/>
    <property type="evidence" value="ECO:0007669"/>
    <property type="project" value="UniProtKB-KW"/>
</dbReference>
<dbReference type="GO" id="GO:0071555">
    <property type="term" value="P:cell wall organization"/>
    <property type="evidence" value="ECO:0007669"/>
    <property type="project" value="UniProtKB-KW"/>
</dbReference>
<dbReference type="GO" id="GO:0009252">
    <property type="term" value="P:peptidoglycan biosynthetic process"/>
    <property type="evidence" value="ECO:0007669"/>
    <property type="project" value="UniProtKB-UniRule"/>
</dbReference>
<dbReference type="GO" id="GO:0008360">
    <property type="term" value="P:regulation of cell shape"/>
    <property type="evidence" value="ECO:0007669"/>
    <property type="project" value="UniProtKB-KW"/>
</dbReference>
<dbReference type="FunFam" id="3.30.1490.20:FF:000007">
    <property type="entry name" value="D-alanine--D-alanine ligase"/>
    <property type="match status" value="1"/>
</dbReference>
<dbReference type="FunFam" id="3.30.470.20:FF:000008">
    <property type="entry name" value="D-alanine--D-alanine ligase"/>
    <property type="match status" value="1"/>
</dbReference>
<dbReference type="Gene3D" id="3.40.50.20">
    <property type="match status" value="1"/>
</dbReference>
<dbReference type="Gene3D" id="3.30.1490.20">
    <property type="entry name" value="ATP-grasp fold, A domain"/>
    <property type="match status" value="1"/>
</dbReference>
<dbReference type="Gene3D" id="3.30.470.20">
    <property type="entry name" value="ATP-grasp fold, B domain"/>
    <property type="match status" value="1"/>
</dbReference>
<dbReference type="HAMAP" id="MF_00047">
    <property type="entry name" value="Dala_Dala_lig"/>
    <property type="match status" value="1"/>
</dbReference>
<dbReference type="InterPro" id="IPR011761">
    <property type="entry name" value="ATP-grasp"/>
</dbReference>
<dbReference type="InterPro" id="IPR013815">
    <property type="entry name" value="ATP_grasp_subdomain_1"/>
</dbReference>
<dbReference type="InterPro" id="IPR000291">
    <property type="entry name" value="D-Ala_lig_Van_CS"/>
</dbReference>
<dbReference type="InterPro" id="IPR005905">
    <property type="entry name" value="D_ala_D_ala"/>
</dbReference>
<dbReference type="InterPro" id="IPR011095">
    <property type="entry name" value="Dala_Dala_lig_C"/>
</dbReference>
<dbReference type="InterPro" id="IPR011127">
    <property type="entry name" value="Dala_Dala_lig_N"/>
</dbReference>
<dbReference type="InterPro" id="IPR016185">
    <property type="entry name" value="PreATP-grasp_dom_sf"/>
</dbReference>
<dbReference type="NCBIfam" id="TIGR01205">
    <property type="entry name" value="D_ala_D_alaTIGR"/>
    <property type="match status" value="1"/>
</dbReference>
<dbReference type="NCBIfam" id="NF002378">
    <property type="entry name" value="PRK01372.1"/>
    <property type="match status" value="1"/>
</dbReference>
<dbReference type="NCBIfam" id="NF002526">
    <property type="entry name" value="PRK01966.1-2"/>
    <property type="match status" value="1"/>
</dbReference>
<dbReference type="NCBIfam" id="NF002528">
    <property type="entry name" value="PRK01966.1-4"/>
    <property type="match status" value="1"/>
</dbReference>
<dbReference type="PANTHER" id="PTHR23132">
    <property type="entry name" value="D-ALANINE--D-ALANINE LIGASE"/>
    <property type="match status" value="1"/>
</dbReference>
<dbReference type="PANTHER" id="PTHR23132:SF25">
    <property type="entry name" value="D-ALANINE--D-ALANINE LIGASE A"/>
    <property type="match status" value="1"/>
</dbReference>
<dbReference type="Pfam" id="PF07478">
    <property type="entry name" value="Dala_Dala_lig_C"/>
    <property type="match status" value="1"/>
</dbReference>
<dbReference type="Pfam" id="PF01820">
    <property type="entry name" value="Dala_Dala_lig_N"/>
    <property type="match status" value="1"/>
</dbReference>
<dbReference type="PIRSF" id="PIRSF039102">
    <property type="entry name" value="Ddl/VanB"/>
    <property type="match status" value="1"/>
</dbReference>
<dbReference type="SUPFAM" id="SSF56059">
    <property type="entry name" value="Glutathione synthetase ATP-binding domain-like"/>
    <property type="match status" value="1"/>
</dbReference>
<dbReference type="SUPFAM" id="SSF52440">
    <property type="entry name" value="PreATP-grasp domain"/>
    <property type="match status" value="1"/>
</dbReference>
<dbReference type="PROSITE" id="PS50975">
    <property type="entry name" value="ATP_GRASP"/>
    <property type="match status" value="1"/>
</dbReference>
<dbReference type="PROSITE" id="PS00843">
    <property type="entry name" value="DALA_DALA_LIGASE_1"/>
    <property type="match status" value="1"/>
</dbReference>
<dbReference type="PROSITE" id="PS00844">
    <property type="entry name" value="DALA_DALA_LIGASE_2"/>
    <property type="match status" value="1"/>
</dbReference>
<protein>
    <recommendedName>
        <fullName evidence="2">D-alanine--D-alanine ligase</fullName>
        <ecNumber evidence="2">6.3.2.4</ecNumber>
    </recommendedName>
    <alternativeName>
        <fullName evidence="2">D-Ala-D-Ala ligase</fullName>
    </alternativeName>
    <alternativeName>
        <fullName evidence="2">D-alanylalanine synthetase</fullName>
    </alternativeName>
</protein>
<feature type="chain" id="PRO_1000030449" description="D-alanine--D-alanine ligase">
    <location>
        <begin position="1"/>
        <end position="367"/>
    </location>
</feature>
<feature type="domain" description="ATP-grasp" evidence="2">
    <location>
        <begin position="141"/>
        <end position="346"/>
    </location>
</feature>
<feature type="binding site" evidence="2">
    <location>
        <begin position="174"/>
        <end position="229"/>
    </location>
    <ligand>
        <name>ATP</name>
        <dbReference type="ChEBI" id="CHEBI:30616"/>
    </ligand>
</feature>
<feature type="binding site" evidence="2">
    <location>
        <position position="300"/>
    </location>
    <ligand>
        <name>Mg(2+)</name>
        <dbReference type="ChEBI" id="CHEBI:18420"/>
        <label>1</label>
    </ligand>
</feature>
<feature type="binding site" evidence="2">
    <location>
        <position position="313"/>
    </location>
    <ligand>
        <name>Mg(2+)</name>
        <dbReference type="ChEBI" id="CHEBI:18420"/>
        <label>1</label>
    </ligand>
</feature>
<feature type="binding site" evidence="2">
    <location>
        <position position="313"/>
    </location>
    <ligand>
        <name>Mg(2+)</name>
        <dbReference type="ChEBI" id="CHEBI:18420"/>
        <label>2</label>
    </ligand>
</feature>
<feature type="binding site" evidence="2">
    <location>
        <position position="315"/>
    </location>
    <ligand>
        <name>Mg(2+)</name>
        <dbReference type="ChEBI" id="CHEBI:18420"/>
        <label>2</label>
    </ligand>
</feature>
<proteinExistence type="inferred from homology"/>
<sequence>MKTKVGVLYGGKSPEHQVSLSTAMAVMNAIDPHKFDVIPIYITPEGQWIKGEQLTGPIEEIKQLQFTSAATALIPVSLNQVPAADSAAGGNEETIDVIFPLLHGPNGEDGTVQGLLEILNIPYVGNGVLASAVGMDKVMMKNLFAQAGLRQAKYIAVTKYDWQKRGETVYDRIERELGYPCFVKPANAGSSVGISKCKQRGDLKAAFIEAFQYDRKIIIEEAIVGREIEIGVIGNDEPICSVVGEIVPKKEFYDYEAKYEDGQTELIIPADVTKEQYETIKQMAITAFQVLDLSGLARVDFFLAEDGAVYINEVNTMPGFTPYSMFPLLWQHSGVPYPELIERLIALALERHQEKQTITYTFKKEKR</sequence>
<organism>
    <name type="scientific">Geobacillus kaustophilus (strain HTA426)</name>
    <dbReference type="NCBI Taxonomy" id="235909"/>
    <lineage>
        <taxon>Bacteria</taxon>
        <taxon>Bacillati</taxon>
        <taxon>Bacillota</taxon>
        <taxon>Bacilli</taxon>
        <taxon>Bacillales</taxon>
        <taxon>Anoxybacillaceae</taxon>
        <taxon>Geobacillus</taxon>
        <taxon>Geobacillus thermoleovorans group</taxon>
    </lineage>
</organism>
<gene>
    <name evidence="2" type="primary">ddl</name>
    <name type="ordered locus">GK0223</name>
</gene>
<accession>Q5L3H2</accession>